<proteinExistence type="evidence at transcript level"/>
<accession>C8VN91</accession>
<accession>Q5BCY2</accession>
<keyword id="KW-0325">Glycoprotein</keyword>
<keyword id="KW-0349">Heme</keyword>
<keyword id="KW-0408">Iron</keyword>
<keyword id="KW-0472">Membrane</keyword>
<keyword id="KW-0479">Metal-binding</keyword>
<keyword id="KW-0503">Monooxygenase</keyword>
<keyword id="KW-0560">Oxidoreductase</keyword>
<keyword id="KW-1185">Reference proteome</keyword>
<keyword id="KW-0812">Transmembrane</keyword>
<keyword id="KW-1133">Transmembrane helix</keyword>
<dbReference type="EC" id="1.-.-.-" evidence="8"/>
<dbReference type="EMBL" id="AACD01000025">
    <property type="protein sequence ID" value="EAA64305.1"/>
    <property type="status" value="ALT_SEQ"/>
    <property type="molecule type" value="Genomic_DNA"/>
</dbReference>
<dbReference type="EMBL" id="BN001307">
    <property type="protein sequence ID" value="CBF85188.1"/>
    <property type="molecule type" value="Genomic_DNA"/>
</dbReference>
<dbReference type="RefSeq" id="XP_659202.1">
    <property type="nucleotide sequence ID" value="XM_654110.1"/>
</dbReference>
<dbReference type="SMR" id="C8VN91"/>
<dbReference type="EnsemblFungi" id="CBF85188">
    <property type="protein sequence ID" value="CBF85188"/>
    <property type="gene ID" value="ANIA_01598"/>
</dbReference>
<dbReference type="GeneID" id="2875700"/>
<dbReference type="KEGG" id="ani:ANIA_01598"/>
<dbReference type="VEuPathDB" id="FungiDB:AN1598"/>
<dbReference type="eggNOG" id="KOG0156">
    <property type="taxonomic scope" value="Eukaryota"/>
</dbReference>
<dbReference type="HOGENOM" id="CLU_022195_0_1_1"/>
<dbReference type="InParanoid" id="C8VN91"/>
<dbReference type="OMA" id="CKDEWVE"/>
<dbReference type="OrthoDB" id="1844152at2759"/>
<dbReference type="UniPathway" id="UPA00213"/>
<dbReference type="Proteomes" id="UP000000560">
    <property type="component" value="Chromosome VII"/>
</dbReference>
<dbReference type="GO" id="GO:0016020">
    <property type="term" value="C:membrane"/>
    <property type="evidence" value="ECO:0007669"/>
    <property type="project" value="UniProtKB-SubCell"/>
</dbReference>
<dbReference type="GO" id="GO:0020037">
    <property type="term" value="F:heme binding"/>
    <property type="evidence" value="ECO:0007669"/>
    <property type="project" value="InterPro"/>
</dbReference>
<dbReference type="GO" id="GO:0005506">
    <property type="term" value="F:iron ion binding"/>
    <property type="evidence" value="ECO:0007669"/>
    <property type="project" value="InterPro"/>
</dbReference>
<dbReference type="GO" id="GO:0004497">
    <property type="term" value="F:monooxygenase activity"/>
    <property type="evidence" value="ECO:0007669"/>
    <property type="project" value="UniProtKB-KW"/>
</dbReference>
<dbReference type="GO" id="GO:0016705">
    <property type="term" value="F:oxidoreductase activity, acting on paired donors, with incorporation or reduction of molecular oxygen"/>
    <property type="evidence" value="ECO:0007669"/>
    <property type="project" value="InterPro"/>
</dbReference>
<dbReference type="GO" id="GO:0019748">
    <property type="term" value="P:secondary metabolic process"/>
    <property type="evidence" value="ECO:0000270"/>
    <property type="project" value="AspGD"/>
</dbReference>
<dbReference type="GO" id="GO:0016114">
    <property type="term" value="P:terpenoid biosynthetic process"/>
    <property type="evidence" value="ECO:0007669"/>
    <property type="project" value="UniProtKB-UniPathway"/>
</dbReference>
<dbReference type="CDD" id="cd11041">
    <property type="entry name" value="CYP503A1-like"/>
    <property type="match status" value="1"/>
</dbReference>
<dbReference type="FunFam" id="1.10.630.10:FF:000059">
    <property type="entry name" value="Cytochrome P450 monooxygenase"/>
    <property type="match status" value="1"/>
</dbReference>
<dbReference type="Gene3D" id="1.10.630.10">
    <property type="entry name" value="Cytochrome P450"/>
    <property type="match status" value="1"/>
</dbReference>
<dbReference type="InterPro" id="IPR001128">
    <property type="entry name" value="Cyt_P450"/>
</dbReference>
<dbReference type="InterPro" id="IPR002403">
    <property type="entry name" value="Cyt_P450_E_grp-IV"/>
</dbReference>
<dbReference type="InterPro" id="IPR036396">
    <property type="entry name" value="Cyt_P450_sf"/>
</dbReference>
<dbReference type="PANTHER" id="PTHR46206">
    <property type="entry name" value="CYTOCHROME P450"/>
    <property type="match status" value="1"/>
</dbReference>
<dbReference type="PANTHER" id="PTHR46206:SF6">
    <property type="entry name" value="CYTOCHROME P450 MONOOXYGENASE AN1598-RELATED"/>
    <property type="match status" value="1"/>
</dbReference>
<dbReference type="Pfam" id="PF00067">
    <property type="entry name" value="p450"/>
    <property type="match status" value="1"/>
</dbReference>
<dbReference type="PRINTS" id="PR00465">
    <property type="entry name" value="EP450IV"/>
</dbReference>
<dbReference type="SUPFAM" id="SSF48264">
    <property type="entry name" value="Cytochrome P450"/>
    <property type="match status" value="1"/>
</dbReference>
<name>PBCG_EMENI</name>
<organism>
    <name type="scientific">Emericella nidulans (strain FGSC A4 / ATCC 38163 / CBS 112.46 / NRRL 194 / M139)</name>
    <name type="common">Aspergillus nidulans</name>
    <dbReference type="NCBI Taxonomy" id="227321"/>
    <lineage>
        <taxon>Eukaryota</taxon>
        <taxon>Fungi</taxon>
        <taxon>Dikarya</taxon>
        <taxon>Ascomycota</taxon>
        <taxon>Pezizomycotina</taxon>
        <taxon>Eurotiomycetes</taxon>
        <taxon>Eurotiomycetidae</taxon>
        <taxon>Eurotiales</taxon>
        <taxon>Aspergillaceae</taxon>
        <taxon>Aspergillus</taxon>
        <taxon>Aspergillus subgen. Nidulantes</taxon>
    </lineage>
</organism>
<evidence type="ECO:0000250" key="1">
    <source>
        <dbReference type="UniProtKB" id="P04798"/>
    </source>
</evidence>
<evidence type="ECO:0000255" key="2"/>
<evidence type="ECO:0000255" key="3">
    <source>
        <dbReference type="PROSITE-ProRule" id="PRU00498"/>
    </source>
</evidence>
<evidence type="ECO:0000269" key="4">
    <source>
    </source>
</evidence>
<evidence type="ECO:0000269" key="5">
    <source>
    </source>
</evidence>
<evidence type="ECO:0000303" key="6">
    <source>
    </source>
</evidence>
<evidence type="ECO:0000305" key="7"/>
<evidence type="ECO:0000305" key="8">
    <source>
    </source>
</evidence>
<protein>
    <recommendedName>
        <fullName evidence="6">Cytochrome P450 monooxygenase AN1598</fullName>
        <ecNumber evidence="8">1.-.-.-</ecNumber>
    </recommendedName>
    <alternativeName>
        <fullName evidence="6">Pimaradiene biosynthesis cluster protein AN1598</fullName>
    </alternativeName>
</protein>
<comment type="function">
    <text evidence="4 5 8">Bifunctional terpene synthase; part of the gene cluster that mediates the biosynthesis of the diterpene ent-pimara-8(14),15-diene (PD) (PubMed:22506079, PubMed:27098256). Within the cluster, the HMG-CoA reductase AN1593 functions in the mevalonate pathway, which produces isoprenoid precursors (PubMed:22506079, PubMed:27098256). The geranylgeranyl pyrophosphate (GGPP) synthase AN1592 is needed in the formation of GGPP, the precursor for diterpenes (PubMed:22506079, PubMed:27098256). Lastly, the pimaradiene synthase pbcA performs the 2 cyclization steps that convert GGPP to ent-pimara-8(14),15-diene (PubMed:22506079, PubMed:27098256). The putative roles of the remaining cluster enzymes in ent-pimara-8(14),15-diene biosynthesis is unclear (Probable). The cytochrome P450 monooxygenase AN1598, the glutathione S-transferase AN1595, the oxidoreductases AN1596 and AN1597 probably function as decorative enzymes (Probable). It is possible that in biological conditions the compound is oxidized to ent-pimara-8(14),15-dien-19-oic acid, which is a bioactive diterpene compound predominant in many plant extracts (Probable).</text>
</comment>
<comment type="cofactor">
    <cofactor evidence="1">
        <name>heme</name>
        <dbReference type="ChEBI" id="CHEBI:30413"/>
    </cofactor>
</comment>
<comment type="pathway">
    <text evidence="8">Secondary metabolite biosynthesis; terpenoid biosynthesis.</text>
</comment>
<comment type="subcellular location">
    <subcellularLocation>
        <location evidence="2">Membrane</location>
        <topology evidence="2">Single-pass membrane protein</topology>
    </subcellularLocation>
</comment>
<comment type="induction">
    <text evidence="4 5">Expression is positively regulated by the cluster-specific transcription factor pbcR.</text>
</comment>
<comment type="similarity">
    <text evidence="7">Belongs to the cytochrome P450 family.</text>
</comment>
<comment type="sequence caution" evidence="7">
    <conflict type="erroneous gene model prediction">
        <sequence resource="EMBL-CDS" id="EAA64305"/>
    </conflict>
</comment>
<gene>
    <name type="ORF">AN1598</name>
    <name type="ORF">ANIA_01598</name>
</gene>
<sequence>MDNYTWHSGTLIPSDSPSSIDRSQLYLEILGVLSVVYLLQTLVAYSKSFKAPFVGFRFWYEPKWLVGLRFSQGALAQVNEGYAKYKNAMFKVARNDSDILVIPNKYVEELRSLPDEKISAIRAHIKNLLGKYSTTLILLESDLHTRMLQTKLTPNLGSFIEVIESELLFAMDQEIPANLDDWQSVNVFHIVLRIVARISARVFLGVPACRNEEWLQTSIHYTENVFATVMLLRRFPKWMHPIVGHLLPSYWAIHRNLRTAKRIISPMVRQRRAEEAKRNPDYVKPNDLLQWMMDGANENDGQPDKLAHRQLLLSLASIHTTTMAAAHCFYDLCQHPEYFEPLREEINDVIAQDGGWKKTTLNKMRKLDSFLKESQRINPPSLLAFNRIVSEDLTLSDGTLLPKGTHFSMPSAAILQDNGVEPGADQFDGFRYYKKRLNPEEANKHQFAMTDNNNLHFGHGKYSCPGRFFASNEIKIIMAHLLTDYEFKYPRGATRPRNLTADENLYPDPSARLLMRRRVVAPPQASITPQLVSA</sequence>
<feature type="chain" id="PRO_0000450845" description="Cytochrome P450 monooxygenase AN1598">
    <location>
        <begin position="1"/>
        <end position="534"/>
    </location>
</feature>
<feature type="transmembrane region" description="Helical" evidence="2">
    <location>
        <begin position="25"/>
        <end position="45"/>
    </location>
</feature>
<feature type="binding site" description="axial binding residue" evidence="1">
    <location>
        <position position="464"/>
    </location>
    <ligand>
        <name>heme</name>
        <dbReference type="ChEBI" id="CHEBI:30413"/>
    </ligand>
    <ligandPart>
        <name>Fe</name>
        <dbReference type="ChEBI" id="CHEBI:18248"/>
    </ligandPart>
</feature>
<feature type="glycosylation site" description="N-linked (GlcNAc...) asparagine" evidence="3">
    <location>
        <position position="3"/>
    </location>
</feature>
<feature type="glycosylation site" description="N-linked (GlcNAc...) asparagine" evidence="3">
    <location>
        <position position="95"/>
    </location>
</feature>
<feature type="glycosylation site" description="N-linked (GlcNAc...) asparagine" evidence="3">
    <location>
        <position position="498"/>
    </location>
</feature>
<reference key="1">
    <citation type="journal article" date="2005" name="Nature">
        <title>Sequencing of Aspergillus nidulans and comparative analysis with A. fumigatus and A. oryzae.</title>
        <authorList>
            <person name="Galagan J.E."/>
            <person name="Calvo S.E."/>
            <person name="Cuomo C."/>
            <person name="Ma L.-J."/>
            <person name="Wortman J.R."/>
            <person name="Batzoglou S."/>
            <person name="Lee S.-I."/>
            <person name="Bastuerkmen M."/>
            <person name="Spevak C.C."/>
            <person name="Clutterbuck J."/>
            <person name="Kapitonov V."/>
            <person name="Jurka J."/>
            <person name="Scazzocchio C."/>
            <person name="Farman M.L."/>
            <person name="Butler J."/>
            <person name="Purcell S."/>
            <person name="Harris S."/>
            <person name="Braus G.H."/>
            <person name="Draht O."/>
            <person name="Busch S."/>
            <person name="D'Enfert C."/>
            <person name="Bouchier C."/>
            <person name="Goldman G.H."/>
            <person name="Bell-Pedersen D."/>
            <person name="Griffiths-Jones S."/>
            <person name="Doonan J.H."/>
            <person name="Yu J."/>
            <person name="Vienken K."/>
            <person name="Pain A."/>
            <person name="Freitag M."/>
            <person name="Selker E.U."/>
            <person name="Archer D.B."/>
            <person name="Penalva M.A."/>
            <person name="Oakley B.R."/>
            <person name="Momany M."/>
            <person name="Tanaka T."/>
            <person name="Kumagai T."/>
            <person name="Asai K."/>
            <person name="Machida M."/>
            <person name="Nierman W.C."/>
            <person name="Denning D.W."/>
            <person name="Caddick M.X."/>
            <person name="Hynes M."/>
            <person name="Paoletti M."/>
            <person name="Fischer R."/>
            <person name="Miller B.L."/>
            <person name="Dyer P.S."/>
            <person name="Sachs M.S."/>
            <person name="Osmani S.A."/>
            <person name="Birren B.W."/>
        </authorList>
    </citation>
    <scope>NUCLEOTIDE SEQUENCE [LARGE SCALE GENOMIC DNA]</scope>
    <source>
        <strain>FGSC A4 / ATCC 38163 / CBS 112.46 / NRRL 194 / M139</strain>
    </source>
</reference>
<reference key="2">
    <citation type="journal article" date="2009" name="Fungal Genet. Biol.">
        <title>The 2008 update of the Aspergillus nidulans genome annotation: a community effort.</title>
        <authorList>
            <person name="Wortman J.R."/>
            <person name="Gilsenan J.M."/>
            <person name="Joardar V."/>
            <person name="Deegan J."/>
            <person name="Clutterbuck J."/>
            <person name="Andersen M.R."/>
            <person name="Archer D."/>
            <person name="Bencina M."/>
            <person name="Braus G."/>
            <person name="Coutinho P."/>
            <person name="von Dohren H."/>
            <person name="Doonan J."/>
            <person name="Driessen A.J."/>
            <person name="Durek P."/>
            <person name="Espeso E."/>
            <person name="Fekete E."/>
            <person name="Flipphi M."/>
            <person name="Estrada C.G."/>
            <person name="Geysens S."/>
            <person name="Goldman G."/>
            <person name="de Groot P.W."/>
            <person name="Hansen K."/>
            <person name="Harris S.D."/>
            <person name="Heinekamp T."/>
            <person name="Helmstaedt K."/>
            <person name="Henrissat B."/>
            <person name="Hofmann G."/>
            <person name="Homan T."/>
            <person name="Horio T."/>
            <person name="Horiuchi H."/>
            <person name="James S."/>
            <person name="Jones M."/>
            <person name="Karaffa L."/>
            <person name="Karanyi Z."/>
            <person name="Kato M."/>
            <person name="Keller N."/>
            <person name="Kelly D.E."/>
            <person name="Kiel J.A."/>
            <person name="Kim J.M."/>
            <person name="van der Klei I.J."/>
            <person name="Klis F.M."/>
            <person name="Kovalchuk A."/>
            <person name="Krasevec N."/>
            <person name="Kubicek C.P."/>
            <person name="Liu B."/>
            <person name="Maccabe A."/>
            <person name="Meyer V."/>
            <person name="Mirabito P."/>
            <person name="Miskei M."/>
            <person name="Mos M."/>
            <person name="Mullins J."/>
            <person name="Nelson D.R."/>
            <person name="Nielsen J."/>
            <person name="Oakley B.R."/>
            <person name="Osmani S.A."/>
            <person name="Pakula T."/>
            <person name="Paszewski A."/>
            <person name="Paulsen I."/>
            <person name="Pilsyk S."/>
            <person name="Pocsi I."/>
            <person name="Punt P.J."/>
            <person name="Ram A.F."/>
            <person name="Ren Q."/>
            <person name="Robellet X."/>
            <person name="Robson G."/>
            <person name="Seiboth B."/>
            <person name="van Solingen P."/>
            <person name="Specht T."/>
            <person name="Sun J."/>
            <person name="Taheri-Talesh N."/>
            <person name="Takeshita N."/>
            <person name="Ussery D."/>
            <person name="vanKuyk P.A."/>
            <person name="Visser H."/>
            <person name="van de Vondervoort P.J."/>
            <person name="de Vries R.P."/>
            <person name="Walton J."/>
            <person name="Xiang X."/>
            <person name="Xiong Y."/>
            <person name="Zeng A.P."/>
            <person name="Brandt B.W."/>
            <person name="Cornell M.J."/>
            <person name="van den Hondel C.A."/>
            <person name="Visser J."/>
            <person name="Oliver S.G."/>
            <person name="Turner G."/>
        </authorList>
    </citation>
    <scope>GENOME REANNOTATION</scope>
    <source>
        <strain>FGSC A4 / ATCC 38163 / CBS 112.46 / NRRL 194 / M139</strain>
    </source>
</reference>
<reference key="3">
    <citation type="journal article" date="2012" name="PLoS ONE">
        <title>Identification and characterization of a novel diterpene gene cluster in Aspergillus nidulans.</title>
        <authorList>
            <person name="Bromann K."/>
            <person name="Toivari M."/>
            <person name="Viljanen K."/>
            <person name="Vuoristo A."/>
            <person name="Ruohonen L."/>
            <person name="Nakari-Setaelae T."/>
        </authorList>
    </citation>
    <scope>FUNCTION</scope>
    <scope>INDUCTION</scope>
    <scope>PATHWAY</scope>
</reference>
<reference key="4">
    <citation type="journal article" date="2016" name="Appl. Microbiol. Biotechnol.">
        <title>Engineering Aspergillus nidulans for heterologous ent-kaurene and gamma-terpinene production.</title>
        <authorList>
            <person name="Bromann K."/>
            <person name="Toivari M."/>
            <person name="Viljanen K."/>
            <person name="Ruohonen L."/>
            <person name="Nakari-Setaelae T."/>
        </authorList>
    </citation>
    <scope>FUNCTION</scope>
    <scope>INDUCTION</scope>
</reference>